<keyword id="KW-0963">Cytoplasm</keyword>
<keyword id="KW-0255">Endonuclease</keyword>
<keyword id="KW-0378">Hydrolase</keyword>
<keyword id="KW-0540">Nuclease</keyword>
<keyword id="KW-0819">tRNA processing</keyword>
<comment type="function">
    <text evidence="1">Part of ribonuclease P, a protein complex that generates mature tRNA molecules by cleaving their 5'-ends.</text>
</comment>
<comment type="catalytic activity">
    <reaction evidence="1">
        <text>Endonucleolytic cleavage of RNA, removing 5'-extranucleotides from tRNA precursor.</text>
        <dbReference type="EC" id="3.1.26.5"/>
    </reaction>
</comment>
<comment type="subunit">
    <text evidence="1">Consists of a catalytic RNA component and at least 4-5 protein subunits.</text>
</comment>
<comment type="subcellular location">
    <subcellularLocation>
        <location evidence="1">Cytoplasm</location>
    </subcellularLocation>
</comment>
<comment type="similarity">
    <text evidence="1">Belongs to the eukaryotic/archaeal RNase P protein component 1 family.</text>
</comment>
<evidence type="ECO:0000255" key="1">
    <source>
        <dbReference type="HAMAP-Rule" id="MF_00754"/>
    </source>
</evidence>
<reference key="1">
    <citation type="journal article" date="2006" name="J. Bacteriol.">
        <title>The Methanosarcina barkeri genome: comparative analysis with Methanosarcina acetivorans and Methanosarcina mazei reveals extensive rearrangement within methanosarcinal genomes.</title>
        <authorList>
            <person name="Maeder D.L."/>
            <person name="Anderson I."/>
            <person name="Brettin T.S."/>
            <person name="Bruce D.C."/>
            <person name="Gilna P."/>
            <person name="Han C.S."/>
            <person name="Lapidus A."/>
            <person name="Metcalf W.W."/>
            <person name="Saunders E."/>
            <person name="Tapia R."/>
            <person name="Sowers K.R."/>
        </authorList>
    </citation>
    <scope>NUCLEOTIDE SEQUENCE [LARGE SCALE GENOMIC DNA]</scope>
    <source>
        <strain>Fusaro / DSM 804</strain>
    </source>
</reference>
<gene>
    <name evidence="1" type="primary">rnp1</name>
    <name type="ordered locus">Mbar_A0102</name>
</gene>
<feature type="chain" id="PRO_1000046613" description="Ribonuclease P protein component 1">
    <location>
        <begin position="1"/>
        <end position="110"/>
    </location>
</feature>
<protein>
    <recommendedName>
        <fullName evidence="1">Ribonuclease P protein component 1</fullName>
        <shortName evidence="1">RNase P component 1</shortName>
        <ecNumber evidence="1">3.1.26.5</ecNumber>
    </recommendedName>
    <alternativeName>
        <fullName evidence="1">Rpp29</fullName>
    </alternativeName>
</protein>
<name>RNP1_METBF</name>
<organism>
    <name type="scientific">Methanosarcina barkeri (strain Fusaro / DSM 804)</name>
    <dbReference type="NCBI Taxonomy" id="269797"/>
    <lineage>
        <taxon>Archaea</taxon>
        <taxon>Methanobacteriati</taxon>
        <taxon>Methanobacteriota</taxon>
        <taxon>Stenosarchaea group</taxon>
        <taxon>Methanomicrobia</taxon>
        <taxon>Methanosarcinales</taxon>
        <taxon>Methanosarcinaceae</taxon>
        <taxon>Methanosarcina</taxon>
    </lineage>
</organism>
<accession>Q46GA3</accession>
<sequence length="110" mass="12603">MKSKVEILPSTLIYHELIGLEIQVIRSTNPALIGIRGRVIDETKNLLIIENSGPRELKIPKADSEFLFRIPTELSEKGRRSDTFVKIQGNLLLSQPENRIKNIKKLRKWG</sequence>
<proteinExistence type="inferred from homology"/>
<dbReference type="EC" id="3.1.26.5" evidence="1"/>
<dbReference type="EMBL" id="CP000099">
    <property type="protein sequence ID" value="AAZ69089.1"/>
    <property type="molecule type" value="Genomic_DNA"/>
</dbReference>
<dbReference type="SMR" id="Q46GA3"/>
<dbReference type="STRING" id="269797.Mbar_A0102"/>
<dbReference type="PaxDb" id="269797-Mbar_A0102"/>
<dbReference type="KEGG" id="mba:Mbar_A0102"/>
<dbReference type="eggNOG" id="arCOG00784">
    <property type="taxonomic scope" value="Archaea"/>
</dbReference>
<dbReference type="HOGENOM" id="CLU_107020_2_0_2"/>
<dbReference type="OrthoDB" id="39019at2157"/>
<dbReference type="GO" id="GO:0005737">
    <property type="term" value="C:cytoplasm"/>
    <property type="evidence" value="ECO:0007669"/>
    <property type="project" value="UniProtKB-SubCell"/>
</dbReference>
<dbReference type="GO" id="GO:0030677">
    <property type="term" value="C:ribonuclease P complex"/>
    <property type="evidence" value="ECO:0007669"/>
    <property type="project" value="UniProtKB-UniRule"/>
</dbReference>
<dbReference type="GO" id="GO:0004526">
    <property type="term" value="F:ribonuclease P activity"/>
    <property type="evidence" value="ECO:0007669"/>
    <property type="project" value="UniProtKB-UniRule"/>
</dbReference>
<dbReference type="GO" id="GO:0003723">
    <property type="term" value="F:RNA binding"/>
    <property type="evidence" value="ECO:0007669"/>
    <property type="project" value="InterPro"/>
</dbReference>
<dbReference type="GO" id="GO:0001682">
    <property type="term" value="P:tRNA 5'-leader removal"/>
    <property type="evidence" value="ECO:0007669"/>
    <property type="project" value="UniProtKB-UniRule"/>
</dbReference>
<dbReference type="Gene3D" id="2.30.30.210">
    <property type="entry name" value="Ribonuclease P/MRP, subunit p29"/>
    <property type="match status" value="1"/>
</dbReference>
<dbReference type="HAMAP" id="MF_00754">
    <property type="entry name" value="RNase_P_1"/>
    <property type="match status" value="1"/>
</dbReference>
<dbReference type="InterPro" id="IPR036980">
    <property type="entry name" value="RNase_P/MRP_Rpp29_sf"/>
</dbReference>
<dbReference type="InterPro" id="IPR023538">
    <property type="entry name" value="RNP1"/>
</dbReference>
<dbReference type="InterPro" id="IPR023534">
    <property type="entry name" value="Rof/RNase_P-like"/>
</dbReference>
<dbReference type="InterPro" id="IPR002730">
    <property type="entry name" value="Rpp29/RNP1"/>
</dbReference>
<dbReference type="NCBIfam" id="NF046110">
    <property type="entry name" value="RNaseP1Mthb"/>
    <property type="match status" value="1"/>
</dbReference>
<dbReference type="Pfam" id="PF01868">
    <property type="entry name" value="RNase_P-MRP_p29"/>
    <property type="match status" value="1"/>
</dbReference>
<dbReference type="SMART" id="SM00538">
    <property type="entry name" value="POP4"/>
    <property type="match status" value="1"/>
</dbReference>
<dbReference type="SUPFAM" id="SSF101744">
    <property type="entry name" value="Rof/RNase P subunit-like"/>
    <property type="match status" value="1"/>
</dbReference>